<name>PLSY_BRADU</name>
<gene>
    <name evidence="1" type="primary">plsY</name>
    <name type="ordered locus">blr5101</name>
</gene>
<feature type="chain" id="PRO_0000188336" description="Glycerol-3-phosphate acyltransferase">
    <location>
        <begin position="1"/>
        <end position="198"/>
    </location>
</feature>
<feature type="transmembrane region" description="Helical" evidence="1">
    <location>
        <begin position="6"/>
        <end position="26"/>
    </location>
</feature>
<feature type="transmembrane region" description="Helical" evidence="1">
    <location>
        <begin position="56"/>
        <end position="78"/>
    </location>
</feature>
<feature type="transmembrane region" description="Helical" evidence="1">
    <location>
        <begin position="83"/>
        <end position="101"/>
    </location>
</feature>
<feature type="transmembrane region" description="Helical" evidence="1">
    <location>
        <begin position="113"/>
        <end position="133"/>
    </location>
</feature>
<feature type="transmembrane region" description="Helical" evidence="1">
    <location>
        <begin position="155"/>
        <end position="175"/>
    </location>
</feature>
<protein>
    <recommendedName>
        <fullName evidence="1">Glycerol-3-phosphate acyltransferase</fullName>
    </recommendedName>
    <alternativeName>
        <fullName evidence="1">Acyl-PO4 G3P acyltransferase</fullName>
    </alternativeName>
    <alternativeName>
        <fullName evidence="1">Acyl-phosphate--glycerol-3-phosphate acyltransferase</fullName>
    </alternativeName>
    <alternativeName>
        <fullName evidence="1">G3P acyltransferase</fullName>
        <shortName evidence="1">GPAT</shortName>
        <ecNumber evidence="1">2.3.1.275</ecNumber>
    </alternativeName>
    <alternativeName>
        <fullName evidence="1">Lysophosphatidic acid synthase</fullName>
        <shortName evidence="1">LPA synthase</shortName>
    </alternativeName>
</protein>
<keyword id="KW-0997">Cell inner membrane</keyword>
<keyword id="KW-1003">Cell membrane</keyword>
<keyword id="KW-0444">Lipid biosynthesis</keyword>
<keyword id="KW-0443">Lipid metabolism</keyword>
<keyword id="KW-0472">Membrane</keyword>
<keyword id="KW-0594">Phospholipid biosynthesis</keyword>
<keyword id="KW-1208">Phospholipid metabolism</keyword>
<keyword id="KW-1185">Reference proteome</keyword>
<keyword id="KW-0808">Transferase</keyword>
<keyword id="KW-0812">Transmembrane</keyword>
<keyword id="KW-1133">Transmembrane helix</keyword>
<evidence type="ECO:0000255" key="1">
    <source>
        <dbReference type="HAMAP-Rule" id="MF_01043"/>
    </source>
</evidence>
<proteinExistence type="inferred from homology"/>
<reference key="1">
    <citation type="journal article" date="2002" name="DNA Res.">
        <title>Complete genomic sequence of nitrogen-fixing symbiotic bacterium Bradyrhizobium japonicum USDA110.</title>
        <authorList>
            <person name="Kaneko T."/>
            <person name="Nakamura Y."/>
            <person name="Sato S."/>
            <person name="Minamisawa K."/>
            <person name="Uchiumi T."/>
            <person name="Sasamoto S."/>
            <person name="Watanabe A."/>
            <person name="Idesawa K."/>
            <person name="Iriguchi M."/>
            <person name="Kawashima K."/>
            <person name="Kohara M."/>
            <person name="Matsumoto M."/>
            <person name="Shimpo S."/>
            <person name="Tsuruoka H."/>
            <person name="Wada T."/>
            <person name="Yamada M."/>
            <person name="Tabata S."/>
        </authorList>
    </citation>
    <scope>NUCLEOTIDE SEQUENCE [LARGE SCALE GENOMIC DNA]</scope>
    <source>
        <strain>JCM 10833 / BCRC 13528 / IAM 13628 / NBRC 14792 / USDA 110</strain>
    </source>
</reference>
<sequence length="198" mass="20941">MGLEAFLPVALVIGYLLGSIPFGLVLTRLAGTQDIRSIGSGSIGATNVLRTGRKSLAAGTLLLDALKGTVAVVIAGYIAGPNAAMAAGLGAFLGHLFPVWLKFKGGKGVAVYIGILLGLFWPAAVVFCLLWLATAFTTRYSSLSALVASFITPMFLWWFGHLALSALFAVLTLLLFYAHRENIKRLQSGKESRIGEKA</sequence>
<dbReference type="EC" id="2.3.1.275" evidence="1"/>
<dbReference type="EMBL" id="BA000040">
    <property type="protein sequence ID" value="BAC50366.1"/>
    <property type="molecule type" value="Genomic_DNA"/>
</dbReference>
<dbReference type="RefSeq" id="NP_771741.1">
    <property type="nucleotide sequence ID" value="NC_004463.1"/>
</dbReference>
<dbReference type="RefSeq" id="WP_011087861.1">
    <property type="nucleotide sequence ID" value="NC_004463.1"/>
</dbReference>
<dbReference type="SMR" id="Q89K17"/>
<dbReference type="FunCoup" id="Q89K17">
    <property type="interactions" value="280"/>
</dbReference>
<dbReference type="STRING" id="224911.AAV28_22875"/>
<dbReference type="EnsemblBacteria" id="BAC50366">
    <property type="protein sequence ID" value="BAC50366"/>
    <property type="gene ID" value="BAC50366"/>
</dbReference>
<dbReference type="GeneID" id="46492107"/>
<dbReference type="KEGG" id="bja:blr5101"/>
<dbReference type="PATRIC" id="fig|224911.44.peg.4970"/>
<dbReference type="eggNOG" id="COG0344">
    <property type="taxonomic scope" value="Bacteria"/>
</dbReference>
<dbReference type="HOGENOM" id="CLU_081254_1_0_5"/>
<dbReference type="InParanoid" id="Q89K17"/>
<dbReference type="OrthoDB" id="9777124at2"/>
<dbReference type="PhylomeDB" id="Q89K17"/>
<dbReference type="UniPathway" id="UPA00085"/>
<dbReference type="Proteomes" id="UP000002526">
    <property type="component" value="Chromosome"/>
</dbReference>
<dbReference type="GO" id="GO:0005886">
    <property type="term" value="C:plasma membrane"/>
    <property type="evidence" value="ECO:0000318"/>
    <property type="project" value="GO_Central"/>
</dbReference>
<dbReference type="GO" id="GO:0043772">
    <property type="term" value="F:acyl-phosphate glycerol-3-phosphate acyltransferase activity"/>
    <property type="evidence" value="ECO:0007669"/>
    <property type="project" value="UniProtKB-UniRule"/>
</dbReference>
<dbReference type="GO" id="GO:0008654">
    <property type="term" value="P:phospholipid biosynthetic process"/>
    <property type="evidence" value="ECO:0007669"/>
    <property type="project" value="UniProtKB-UniRule"/>
</dbReference>
<dbReference type="HAMAP" id="MF_01043">
    <property type="entry name" value="PlsY"/>
    <property type="match status" value="1"/>
</dbReference>
<dbReference type="InterPro" id="IPR003811">
    <property type="entry name" value="G3P_acylTferase_PlsY"/>
</dbReference>
<dbReference type="NCBIfam" id="TIGR00023">
    <property type="entry name" value="glycerol-3-phosphate 1-O-acyltransferase PlsY"/>
    <property type="match status" value="1"/>
</dbReference>
<dbReference type="PANTHER" id="PTHR30309:SF0">
    <property type="entry name" value="GLYCEROL-3-PHOSPHATE ACYLTRANSFERASE-RELATED"/>
    <property type="match status" value="1"/>
</dbReference>
<dbReference type="PANTHER" id="PTHR30309">
    <property type="entry name" value="INNER MEMBRANE PROTEIN YGIH"/>
    <property type="match status" value="1"/>
</dbReference>
<dbReference type="Pfam" id="PF02660">
    <property type="entry name" value="G3P_acyltransf"/>
    <property type="match status" value="1"/>
</dbReference>
<dbReference type="SMART" id="SM01207">
    <property type="entry name" value="G3P_acyltransf"/>
    <property type="match status" value="1"/>
</dbReference>
<accession>Q89K17</accession>
<comment type="function">
    <text evidence="1">Catalyzes the transfer of an acyl group from acyl-phosphate (acyl-PO(4)) to glycerol-3-phosphate (G3P) to form lysophosphatidic acid (LPA). This enzyme utilizes acyl-phosphate as fatty acyl donor, but not acyl-CoA or acyl-ACP.</text>
</comment>
<comment type="catalytic activity">
    <reaction evidence="1">
        <text>an acyl phosphate + sn-glycerol 3-phosphate = a 1-acyl-sn-glycero-3-phosphate + phosphate</text>
        <dbReference type="Rhea" id="RHEA:34075"/>
        <dbReference type="ChEBI" id="CHEBI:43474"/>
        <dbReference type="ChEBI" id="CHEBI:57597"/>
        <dbReference type="ChEBI" id="CHEBI:57970"/>
        <dbReference type="ChEBI" id="CHEBI:59918"/>
        <dbReference type="EC" id="2.3.1.275"/>
    </reaction>
</comment>
<comment type="pathway">
    <text evidence="1">Lipid metabolism; phospholipid metabolism.</text>
</comment>
<comment type="subunit">
    <text evidence="1">Probably interacts with PlsX.</text>
</comment>
<comment type="subcellular location">
    <subcellularLocation>
        <location evidence="1">Cell inner membrane</location>
        <topology evidence="1">Multi-pass membrane protein</topology>
    </subcellularLocation>
</comment>
<comment type="similarity">
    <text evidence="1">Belongs to the PlsY family.</text>
</comment>
<organism>
    <name type="scientific">Bradyrhizobium diazoefficiens (strain JCM 10833 / BCRC 13528 / IAM 13628 / NBRC 14792 / USDA 110)</name>
    <dbReference type="NCBI Taxonomy" id="224911"/>
    <lineage>
        <taxon>Bacteria</taxon>
        <taxon>Pseudomonadati</taxon>
        <taxon>Pseudomonadota</taxon>
        <taxon>Alphaproteobacteria</taxon>
        <taxon>Hyphomicrobiales</taxon>
        <taxon>Nitrobacteraceae</taxon>
        <taxon>Bradyrhizobium</taxon>
    </lineage>
</organism>